<feature type="chain" id="PRO_0000099392" description="Probable host range protein 2">
    <location>
        <begin position="1"/>
        <end position="197"/>
    </location>
</feature>
<feature type="region of interest" description="Disordered" evidence="1">
    <location>
        <begin position="172"/>
        <end position="197"/>
    </location>
</feature>
<feature type="compositionally biased region" description="Acidic residues" evidence="1">
    <location>
        <begin position="174"/>
        <end position="197"/>
    </location>
</feature>
<comment type="similarity">
    <text evidence="2">Belongs to the poxviridae C7 protein family.</text>
</comment>
<organismHost>
    <name type="scientific">Ovis aries</name>
    <name type="common">Sheep</name>
    <dbReference type="NCBI Taxonomy" id="9940"/>
</organismHost>
<accession>P19747</accession>
<gene>
    <name type="ORF">CF8A</name>
</gene>
<evidence type="ECO:0000256" key="1">
    <source>
        <dbReference type="SAM" id="MobiDB-lite"/>
    </source>
</evidence>
<evidence type="ECO:0000305" key="2"/>
<keyword id="KW-0244">Early protein</keyword>
<protein>
    <recommendedName>
        <fullName>Probable host range protein 2</fullName>
    </recommendedName>
</protein>
<dbReference type="EMBL" id="D00423">
    <property type="protein sequence ID" value="BAA00325.1"/>
    <property type="molecule type" value="Genomic_DNA"/>
</dbReference>
<dbReference type="PIR" id="C31813">
    <property type="entry name" value="WZVZCP"/>
</dbReference>
<dbReference type="SMR" id="P19747"/>
<dbReference type="GO" id="GO:0016032">
    <property type="term" value="P:viral process"/>
    <property type="evidence" value="ECO:0007669"/>
    <property type="project" value="InterPro"/>
</dbReference>
<dbReference type="InterPro" id="IPR004967">
    <property type="entry name" value="Poxvirus_C7/F8A"/>
</dbReference>
<dbReference type="Pfam" id="PF03287">
    <property type="entry name" value="Pox_C7_F8A"/>
    <property type="match status" value="1"/>
</dbReference>
<dbReference type="PIRSF" id="PIRSF003779">
    <property type="entry name" value="VAC_C7L"/>
    <property type="match status" value="1"/>
</dbReference>
<proteinExistence type="inferred from homology"/>
<reference key="1">
    <citation type="journal article" date="1989" name="J. Gen. Virol.">
        <title>The nucleotide sequence around the capripoxvirus thymidine kinase gene reveals a gene shared specifically with leporipoxvirus.</title>
        <authorList>
            <person name="Gershon P.D."/>
            <person name="Black D.N."/>
        </authorList>
    </citation>
    <scope>NUCLEOTIDE SEQUENCE [GENOMIC DNA]</scope>
</reference>
<organism>
    <name type="scientific">Sheeppox virus (strain KS-1)</name>
    <name type="common">SPPV</name>
    <name type="synonym">Capripoxvirus (strain KS-1)</name>
    <dbReference type="NCBI Taxonomy" id="10269"/>
    <lineage>
        <taxon>Viruses</taxon>
        <taxon>Varidnaviria</taxon>
        <taxon>Bamfordvirae</taxon>
        <taxon>Nucleocytoviricota</taxon>
        <taxon>Pokkesviricetes</taxon>
        <taxon>Chitovirales</taxon>
        <taxon>Poxviridae</taxon>
        <taxon>Chordopoxvirinae</taxon>
        <taxon>Capripoxvirus</taxon>
        <taxon>Sheeppox virus</taxon>
    </lineage>
</organism>
<name>VHR2_SHEVK</name>
<sequence>MGIRHELDILLVSENLALKNVELLKGDSYGCTINIKVNQQKKLDFIIILRPDWTEVRNVKKINMVCNGVVIDTTLIKKSFYEEVYSSSVTVFQNTTVEFFSDTSKKYKEEYPIVNINTIKRYYEIKDSRMTCINFESPISDYDQVNYLKDYINISDDYYLYDACDDCIISSDHDDNDNADDDEEDDDEVNDIEDDYE</sequence>